<accession>Q7JGF7</accession>
<gene>
    <name type="primary">SRY</name>
    <name type="synonym">TDF</name>
</gene>
<feature type="chain" id="PRO_0000048645" description="Sex-determining region Y protein">
    <location>
        <begin position="1"/>
        <end position="229"/>
    </location>
</feature>
<feature type="DNA-binding region" description="HMG box" evidence="3">
    <location>
        <begin position="54"/>
        <end position="122"/>
    </location>
</feature>
<feature type="region of interest" description="Disordered" evidence="4">
    <location>
        <begin position="32"/>
        <end position="52"/>
    </location>
</feature>
<feature type="compositionally biased region" description="Basic and acidic residues" evidence="4">
    <location>
        <begin position="39"/>
        <end position="52"/>
    </location>
</feature>
<protein>
    <recommendedName>
        <fullName>Sex-determining region Y protein</fullName>
    </recommendedName>
    <alternativeName>
        <fullName>Testis-determining factor</fullName>
    </alternativeName>
</protein>
<comment type="function">
    <text evidence="1 2">Transcriptional regulator that controls a genetic switch in male development. It is necessary and sufficient for initiating male sex determination by directing the development of supporting cell precursors (pre-Sertoli cells) as Sertoli rather than granulosa cells. Involved in different aspects of gene regulation including promoter activation or repression. Binds to the DNA consensus sequence 5'-[AT]AACAA[AT]-3'. SRY HMG box recognizes DNA by partial intercalation in the minor groove and promotes DNA bending. Also involved in pre-mRNA splicing (By similarity). In male adult brain involved in the maintenance of motor functions of dopaminergic neurons (By similarity).</text>
</comment>
<comment type="subunit">
    <text evidence="2">Interacts with CALM, EP300, HDAC3, KPNB1, ZNF208 isoform KRAB-O, PARP1, SLC9A3R2 and WT1. The interaction with EP300 modulates its DNA-binding activity. The interaction with KPNB1 is sensitive to dissociation by Ran in the GTP-bound form. Interaction with PARP1 impaired its DNA-binding activity.</text>
</comment>
<comment type="subcellular location">
    <subcellularLocation>
        <location evidence="2">Nucleus speckle</location>
    </subcellularLocation>
    <subcellularLocation>
        <location evidence="2">Cytoplasm</location>
    </subcellularLocation>
    <subcellularLocation>
        <location evidence="2">Nucleus</location>
    </subcellularLocation>
</comment>
<comment type="PTM">
    <text evidence="2">Acetylation of Lys-130 contributes to its nuclear localization and enhances its interaction with KPNB1. Deacetylated by HDAC3.</text>
</comment>
<comment type="similarity">
    <text evidence="5">Belongs to the SRY family.</text>
</comment>
<comment type="online information" name="Protein Spotlight">
    <link uri="https://www.proteinspotlight.org/back_issues/080"/>
    <text>The tenuous nature of sex - Issue 80 of March 2007</text>
</comment>
<sequence>MFRVLNDDVYSPAVVQQQTTLAFRKDSSLCTDSHSANDQCERGEHVRESSQDHVKRPMNAFIVWSRERRRKVALENPKMKNSDISKQLGYEWKRLTDAEKRPFFEEAQRLLAIHRDKYPGYKYRPRRRAKRPQKSLPADSSILCNPMHVETLHPFTYRDGCAKTTYSQMESQLSRSQSVIITNSLLQKEHHSSWTSLGHNKVTLATRISADFPFNKSLEPGLSCAYFQY</sequence>
<keyword id="KW-0007">Acetylation</keyword>
<keyword id="KW-0010">Activator</keyword>
<keyword id="KW-0112">Calmodulin-binding</keyword>
<keyword id="KW-0963">Cytoplasm</keyword>
<keyword id="KW-0221">Differentiation</keyword>
<keyword id="KW-0238">DNA-binding</keyword>
<keyword id="KW-0539">Nucleus</keyword>
<keyword id="KW-1185">Reference proteome</keyword>
<keyword id="KW-0678">Repressor</keyword>
<keyword id="KW-0726">Sexual differentiation</keyword>
<keyword id="KW-0804">Transcription</keyword>
<keyword id="KW-0805">Transcription regulation</keyword>
<proteinExistence type="inferred from homology"/>
<name>SRY_BOSIN</name>
<evidence type="ECO:0000250" key="1">
    <source>
        <dbReference type="UniProtKB" id="P36394"/>
    </source>
</evidence>
<evidence type="ECO:0000250" key="2">
    <source>
        <dbReference type="UniProtKB" id="Q05066"/>
    </source>
</evidence>
<evidence type="ECO:0000255" key="3">
    <source>
        <dbReference type="PROSITE-ProRule" id="PRU00267"/>
    </source>
</evidence>
<evidence type="ECO:0000256" key="4">
    <source>
        <dbReference type="SAM" id="MobiDB-lite"/>
    </source>
</evidence>
<evidence type="ECO:0000305" key="5"/>
<reference key="1">
    <citation type="journal article" date="2003" name="Anim. Genet.">
        <title>Phylogenies using mtDNA and SRY provide evidence for male-mediated introgression in Asian domestic cattle.</title>
        <authorList>
            <person name="Kikkawa Y."/>
            <person name="Takada T."/>
            <person name="Sutopo X."/>
            <person name="Nomura K."/>
            <person name="Namikawa T."/>
            <person name="Yonekawa H."/>
            <person name="Amano T."/>
        </authorList>
    </citation>
    <scope>NUCLEOTIDE SEQUENCE [GENOMIC DNA]</scope>
</reference>
<reference key="2">
    <citation type="journal article" date="2004" name="Mol. Biol. Evol.">
        <title>Maternal and paternal lineages in cross-breeding bovine species. Has wisent a hybrid origin?</title>
        <authorList>
            <person name="Verkaar E.L.C."/>
            <person name="Nijman I.J."/>
            <person name="Beeke M."/>
            <person name="Hanekamp E."/>
            <person name="Lenstra J.A."/>
        </authorList>
    </citation>
    <scope>NUCLEOTIDE SEQUENCE [GENOMIC DNA]</scope>
</reference>
<dbReference type="EMBL" id="AB077318">
    <property type="protein sequence ID" value="BAC41383.1"/>
    <property type="molecule type" value="Genomic_DNA"/>
</dbReference>
<dbReference type="EMBL" id="AY079145">
    <property type="protein sequence ID" value="AAL86546.1"/>
    <property type="molecule type" value="Genomic_DNA"/>
</dbReference>
<dbReference type="RefSeq" id="XP_019812159.1">
    <property type="nucleotide sequence ID" value="XM_019956600.1"/>
</dbReference>
<dbReference type="SMR" id="Q7JGF7"/>
<dbReference type="KEGG" id="biu:109555752"/>
<dbReference type="CTD" id="6736"/>
<dbReference type="OrthoDB" id="23664at91561"/>
<dbReference type="Proteomes" id="UP000515132">
    <property type="component" value="Chromosome Y"/>
</dbReference>
<dbReference type="GO" id="GO:0005737">
    <property type="term" value="C:cytoplasm"/>
    <property type="evidence" value="ECO:0007669"/>
    <property type="project" value="UniProtKB-SubCell"/>
</dbReference>
<dbReference type="GO" id="GO:0016607">
    <property type="term" value="C:nuclear speck"/>
    <property type="evidence" value="ECO:0007669"/>
    <property type="project" value="UniProtKB-SubCell"/>
</dbReference>
<dbReference type="GO" id="GO:0005634">
    <property type="term" value="C:nucleus"/>
    <property type="evidence" value="ECO:0000250"/>
    <property type="project" value="UniProtKB"/>
</dbReference>
<dbReference type="GO" id="GO:0005516">
    <property type="term" value="F:calmodulin binding"/>
    <property type="evidence" value="ECO:0007669"/>
    <property type="project" value="UniProtKB-KW"/>
</dbReference>
<dbReference type="GO" id="GO:0001228">
    <property type="term" value="F:DNA-binding transcription activator activity, RNA polymerase II-specific"/>
    <property type="evidence" value="ECO:0007669"/>
    <property type="project" value="TreeGrafter"/>
</dbReference>
<dbReference type="GO" id="GO:0000978">
    <property type="term" value="F:RNA polymerase II cis-regulatory region sequence-specific DNA binding"/>
    <property type="evidence" value="ECO:0007669"/>
    <property type="project" value="TreeGrafter"/>
</dbReference>
<dbReference type="GO" id="GO:0030154">
    <property type="term" value="P:cell differentiation"/>
    <property type="evidence" value="ECO:0007669"/>
    <property type="project" value="UniProtKB-KW"/>
</dbReference>
<dbReference type="GO" id="GO:0030238">
    <property type="term" value="P:male sex determination"/>
    <property type="evidence" value="ECO:0007669"/>
    <property type="project" value="InterPro"/>
</dbReference>
<dbReference type="GO" id="GO:0007548">
    <property type="term" value="P:sex differentiation"/>
    <property type="evidence" value="ECO:0007669"/>
    <property type="project" value="UniProtKB-KW"/>
</dbReference>
<dbReference type="CDD" id="cd22034">
    <property type="entry name" value="HMG-box_SoxA_SRY"/>
    <property type="match status" value="1"/>
</dbReference>
<dbReference type="FunFam" id="1.10.30.10:FF:000002">
    <property type="entry name" value="transcription factor Sox-2"/>
    <property type="match status" value="1"/>
</dbReference>
<dbReference type="Gene3D" id="1.10.30.10">
    <property type="entry name" value="High mobility group box domain"/>
    <property type="match status" value="1"/>
</dbReference>
<dbReference type="InterPro" id="IPR009071">
    <property type="entry name" value="HMG_box_dom"/>
</dbReference>
<dbReference type="InterPro" id="IPR036910">
    <property type="entry name" value="HMG_box_dom_sf"/>
</dbReference>
<dbReference type="InterPro" id="IPR017253">
    <property type="entry name" value="SRY"/>
</dbReference>
<dbReference type="InterPro" id="IPR050140">
    <property type="entry name" value="SRY-related_HMG-box_TF-like"/>
</dbReference>
<dbReference type="PANTHER" id="PTHR10270:SF161">
    <property type="entry name" value="SEX-DETERMINING REGION Y PROTEIN"/>
    <property type="match status" value="1"/>
</dbReference>
<dbReference type="PANTHER" id="PTHR10270">
    <property type="entry name" value="SOX TRANSCRIPTION FACTOR"/>
    <property type="match status" value="1"/>
</dbReference>
<dbReference type="Pfam" id="PF00505">
    <property type="entry name" value="HMG_box"/>
    <property type="match status" value="1"/>
</dbReference>
<dbReference type="PIRSF" id="PIRSF037653">
    <property type="entry name" value="SRY"/>
    <property type="match status" value="1"/>
</dbReference>
<dbReference type="SMART" id="SM00398">
    <property type="entry name" value="HMG"/>
    <property type="match status" value="1"/>
</dbReference>
<dbReference type="SUPFAM" id="SSF47095">
    <property type="entry name" value="HMG-box"/>
    <property type="match status" value="1"/>
</dbReference>
<dbReference type="PROSITE" id="PS50118">
    <property type="entry name" value="HMG_BOX_2"/>
    <property type="match status" value="1"/>
</dbReference>
<organism>
    <name type="scientific">Bos indicus</name>
    <name type="common">Zebu</name>
    <dbReference type="NCBI Taxonomy" id="9915"/>
    <lineage>
        <taxon>Eukaryota</taxon>
        <taxon>Metazoa</taxon>
        <taxon>Chordata</taxon>
        <taxon>Craniata</taxon>
        <taxon>Vertebrata</taxon>
        <taxon>Euteleostomi</taxon>
        <taxon>Mammalia</taxon>
        <taxon>Eutheria</taxon>
        <taxon>Laurasiatheria</taxon>
        <taxon>Artiodactyla</taxon>
        <taxon>Ruminantia</taxon>
        <taxon>Pecora</taxon>
        <taxon>Bovidae</taxon>
        <taxon>Bovinae</taxon>
        <taxon>Bos</taxon>
    </lineage>
</organism>